<comment type="function">
    <text evidence="7 8">Together with EMD, contributes to nuclear envelope stiffness in germ cells (PubMed:32923640). Required for female fertility (PubMed:32923640). Essential for normal erythropoiesis (PubMed:36215313). Required for efficient nuclear envelope opening and enucleation during the late stages of erythroblast maturation (PubMed:36215313).</text>
</comment>
<comment type="subunit">
    <text evidence="1 2 6">Homooligomer (By similarity). Interacts with RAN-GTP (PubMed:25946333). Interacts with EMD (By similarity).</text>
</comment>
<comment type="interaction">
    <interactant intactId="EBI-12595939">
        <id>Q6ZQE4</id>
    </interactant>
    <interactant intactId="EBI-286564">
        <id>P62827</id>
        <label>Ran</label>
    </interactant>
    <organismsDiffer>false</organismsDiffer>
    <experiments>7</experiments>
</comment>
<comment type="subcellular location">
    <subcellularLocation>
        <location evidence="6">Nucleus inner membrane</location>
        <topology evidence="3">Multi-pass membrane protein</topology>
        <orientation evidence="1">Nucleoplasmic side</orientation>
    </subcellularLocation>
    <subcellularLocation>
        <location evidence="6 8">Nucleus envelope</location>
    </subcellularLocation>
    <text evidence="6">Colocalizes with lamins and RAN-GTP at the nuclear envelope.</text>
</comment>
<comment type="tissue specificity">
    <text evidence="7">In the ovary, expression is strongest in primordial follicle oocytes and rapidly declines as oocytes mature and move from the cortex (at protein level).</text>
</comment>
<comment type="domain">
    <text evidence="1">The transmembrane domains are required and sufficient for its oligomerization.</text>
</comment>
<comment type="PTM">
    <text evidence="6">Phosphorylated. Phosphorylation may regulate its interaction with RAN-GTP.</text>
</comment>
<comment type="disruption phenotype">
    <text evidence="7 8">Mutants are viable and generally healthy although anemic (PubMed:32923640). Most females are sterile or severely subfertile while males are fertile (PubMed:32923640). Marked reduction in the number of primordial follicles, indicating a reduced ovarian reserve, and oocytes have reduced nuclear envelope stiffness (PubMed:32923640). Mice show peripheral blood defects, anemia in neonates, ineffective erythropoiesis, splenomegaly, and stress erythropoiesis (PubMed:36215313).</text>
</comment>
<comment type="similarity">
    <text evidence="9">Belongs to the NEMP family.</text>
</comment>
<comment type="sequence caution" evidence="9">
    <conflict type="erroneous initiation">
        <sequence resource="EMBL-CDS" id="BAC97920"/>
    </conflict>
    <text>Extended N-terminus.</text>
</comment>
<accession>Q6ZQE4</accession>
<keyword id="KW-0265">Erythrocyte maturation</keyword>
<keyword id="KW-0325">Glycoprotein</keyword>
<keyword id="KW-0472">Membrane</keyword>
<keyword id="KW-0539">Nucleus</keyword>
<keyword id="KW-0597">Phosphoprotein</keyword>
<keyword id="KW-1185">Reference proteome</keyword>
<keyword id="KW-0732">Signal</keyword>
<keyword id="KW-0812">Transmembrane</keyword>
<keyword id="KW-1133">Transmembrane helix</keyword>
<name>NEMP1_MOUSE</name>
<dbReference type="EMBL" id="AK129110">
    <property type="protein sequence ID" value="BAC97920.1"/>
    <property type="status" value="ALT_INIT"/>
    <property type="molecule type" value="mRNA"/>
</dbReference>
<dbReference type="CCDS" id="CCDS48720.1"/>
<dbReference type="RefSeq" id="NP_001106682.1">
    <property type="nucleotide sequence ID" value="NM_001113211.1"/>
</dbReference>
<dbReference type="BioGRID" id="229124">
    <property type="interactions" value="2"/>
</dbReference>
<dbReference type="FunCoup" id="Q6ZQE4">
    <property type="interactions" value="2752"/>
</dbReference>
<dbReference type="IntAct" id="Q6ZQE4">
    <property type="interactions" value="2"/>
</dbReference>
<dbReference type="STRING" id="10090.ENSMUSP00000045988"/>
<dbReference type="GlyCosmos" id="Q6ZQE4">
    <property type="glycosylation" value="1 site, No reported glycans"/>
</dbReference>
<dbReference type="GlyGen" id="Q6ZQE4">
    <property type="glycosylation" value="1 site, 1 N-linked glycan (1 site)"/>
</dbReference>
<dbReference type="iPTMnet" id="Q6ZQE4"/>
<dbReference type="PhosphoSitePlus" id="Q6ZQE4"/>
<dbReference type="SwissPalm" id="Q6ZQE4"/>
<dbReference type="PaxDb" id="10090-ENSMUSP00000045988"/>
<dbReference type="ProteomicsDB" id="287372"/>
<dbReference type="Pumba" id="Q6ZQE4"/>
<dbReference type="Antibodypedia" id="16059">
    <property type="antibodies" value="29 antibodies from 15 providers"/>
</dbReference>
<dbReference type="DNASU" id="210035"/>
<dbReference type="Ensembl" id="ENSMUST00000048099.5">
    <property type="protein sequence ID" value="ENSMUSP00000045988.5"/>
    <property type="gene ID" value="ENSMUSG00000040195.12"/>
</dbReference>
<dbReference type="GeneID" id="210035"/>
<dbReference type="KEGG" id="mmu:210035"/>
<dbReference type="UCSC" id="uc007hke.2">
    <property type="organism name" value="mouse"/>
</dbReference>
<dbReference type="AGR" id="MGI:2446113"/>
<dbReference type="CTD" id="23306"/>
<dbReference type="MGI" id="MGI:2446113">
    <property type="gene designation" value="Nemp1"/>
</dbReference>
<dbReference type="VEuPathDB" id="HostDB:ENSMUSG00000040195"/>
<dbReference type="eggNOG" id="KOG3817">
    <property type="taxonomic scope" value="Eukaryota"/>
</dbReference>
<dbReference type="GeneTree" id="ENSGT00390000002174"/>
<dbReference type="InParanoid" id="Q6ZQE4"/>
<dbReference type="OMA" id="MAGCMKM"/>
<dbReference type="OrthoDB" id="66136at9989"/>
<dbReference type="PhylomeDB" id="Q6ZQE4"/>
<dbReference type="TreeFam" id="TF314831"/>
<dbReference type="BioGRID-ORCS" id="210035">
    <property type="hits" value="2 hits in 77 CRISPR screens"/>
</dbReference>
<dbReference type="ChiTaRS" id="Nemp1">
    <property type="organism name" value="mouse"/>
</dbReference>
<dbReference type="PRO" id="PR:Q6ZQE4"/>
<dbReference type="Proteomes" id="UP000000589">
    <property type="component" value="Chromosome 10"/>
</dbReference>
<dbReference type="RNAct" id="Q6ZQE4">
    <property type="molecule type" value="protein"/>
</dbReference>
<dbReference type="Bgee" id="ENSMUSG00000040195">
    <property type="expression patterns" value="Expressed in spermatocyte and 168 other cell types or tissues"/>
</dbReference>
<dbReference type="ExpressionAtlas" id="Q6ZQE4">
    <property type="expression patterns" value="baseline and differential"/>
</dbReference>
<dbReference type="GO" id="GO:0005635">
    <property type="term" value="C:nuclear envelope"/>
    <property type="evidence" value="ECO:0000314"/>
    <property type="project" value="UniProtKB"/>
</dbReference>
<dbReference type="GO" id="GO:0005637">
    <property type="term" value="C:nuclear inner membrane"/>
    <property type="evidence" value="ECO:0007669"/>
    <property type="project" value="UniProtKB-SubCell"/>
</dbReference>
<dbReference type="GO" id="GO:0043131">
    <property type="term" value="P:erythrocyte enucleation"/>
    <property type="evidence" value="ECO:0000315"/>
    <property type="project" value="UniProtKB"/>
</dbReference>
<dbReference type="GO" id="GO:0043249">
    <property type="term" value="P:erythrocyte maturation"/>
    <property type="evidence" value="ECO:0000315"/>
    <property type="project" value="UniProtKB"/>
</dbReference>
<dbReference type="GO" id="GO:0071763">
    <property type="term" value="P:nuclear membrane organization"/>
    <property type="evidence" value="ECO:0007669"/>
    <property type="project" value="Ensembl"/>
</dbReference>
<dbReference type="InterPro" id="IPR019358">
    <property type="entry name" value="NEMP_fam"/>
</dbReference>
<dbReference type="PANTHER" id="PTHR13598">
    <property type="entry name" value="AT07567P-RELATED"/>
    <property type="match status" value="1"/>
</dbReference>
<dbReference type="PANTHER" id="PTHR13598:SF2">
    <property type="entry name" value="NUCLEAR ENVELOPE INTEGRAL MEMBRANE PROTEIN 1"/>
    <property type="match status" value="1"/>
</dbReference>
<dbReference type="Pfam" id="PF10225">
    <property type="entry name" value="NEMP"/>
    <property type="match status" value="1"/>
</dbReference>
<gene>
    <name type="primary">Nemp1</name>
    <name type="synonym">Kiaa0286</name>
    <name type="synonym">Tmem194</name>
    <name type="synonym">Tmem194a</name>
</gene>
<protein>
    <recommendedName>
        <fullName>Nuclear envelope integral membrane protein 1</fullName>
    </recommendedName>
</protein>
<reference key="1">
    <citation type="journal article" date="2003" name="DNA Res.">
        <title>Prediction of the coding sequences of mouse homologues of KIAA gene: III. The complete nucleotide sequences of 500 mouse KIAA-homologous cDNAs identified by screening of terminal sequences of cDNA clones randomly sampled from size-fractionated libraries.</title>
        <authorList>
            <person name="Okazaki N."/>
            <person name="Kikuno R."/>
            <person name="Ohara R."/>
            <person name="Inamoto S."/>
            <person name="Koseki H."/>
            <person name="Hiraoka S."/>
            <person name="Saga Y."/>
            <person name="Nagase T."/>
            <person name="Ohara O."/>
            <person name="Koga H."/>
        </authorList>
    </citation>
    <scope>NUCLEOTIDE SEQUENCE [LARGE SCALE MRNA]</scope>
    <source>
        <tissue>Embryonic tail</tissue>
    </source>
</reference>
<reference key="2">
    <citation type="journal article" date="2009" name="Nat. Biotechnol.">
        <title>Mass-spectrometric identification and relative quantification of N-linked cell surface glycoproteins.</title>
        <authorList>
            <person name="Wollscheid B."/>
            <person name="Bausch-Fluck D."/>
            <person name="Henderson C."/>
            <person name="O'Brien R."/>
            <person name="Bibel M."/>
            <person name="Schiess R."/>
            <person name="Aebersold R."/>
            <person name="Watts J.D."/>
        </authorList>
    </citation>
    <scope>GLYCOSYLATION [LARGE SCALE ANALYSIS] AT ASN-123</scope>
</reference>
<reference key="3">
    <citation type="journal article" date="2015" name="PLoS ONE">
        <title>The inner nuclear membrane protein Nemp1 is a new type of RanGTP-binding protein in eukaryotes.</title>
        <authorList>
            <person name="Shibano T."/>
            <person name="Mamada H."/>
            <person name="Hakuno F."/>
            <person name="Takahashi S."/>
            <person name="Taira M."/>
        </authorList>
    </citation>
    <scope>SUBCELLULAR LOCATION</scope>
    <scope>INTERACTION WITH RAN</scope>
    <scope>PHOSPHORYLATION</scope>
    <scope>MUTAGENESIS OF SER-366; SER-376; SER-380; SER-419 AND SER-420</scope>
</reference>
<reference key="4">
    <citation type="journal article" date="2020" name="Sci. Adv.">
        <title>The NEMP family supports metazoan fertility and nuclear envelope stiffness.</title>
        <authorList>
            <person name="Tsatskis Y."/>
            <person name="Rosenfeld R."/>
            <person name="Pearson J.D."/>
            <person name="Boswell C."/>
            <person name="Qu Y."/>
            <person name="Kim K."/>
            <person name="Fabian L."/>
            <person name="Mohammad A."/>
            <person name="Wang X."/>
            <person name="Robson M.I."/>
            <person name="Krchma K."/>
            <person name="Wu J."/>
            <person name="Goncalves J."/>
            <person name="Hodzic D."/>
            <person name="Wu S."/>
            <person name="Potter D."/>
            <person name="Pelletier L."/>
            <person name="Dunham W.H."/>
            <person name="Gingras A.C."/>
            <person name="Sun Y."/>
            <person name="Meng J."/>
            <person name="Godt D."/>
            <person name="Schedl T."/>
            <person name="Ciruna B."/>
            <person name="Choi K."/>
            <person name="Perry J.R.B."/>
            <person name="Bremner R."/>
            <person name="Schirmer E.C."/>
            <person name="Brill J.A."/>
            <person name="Jurisicova A."/>
            <person name="McNeill H."/>
        </authorList>
    </citation>
    <scope>FUNCTION</scope>
    <scope>TISSUE SPECIFICITY</scope>
    <scope>DISRUPTION PHENOTYPE</scope>
</reference>
<reference key="5">
    <citation type="journal article" date="2022" name="PLoS Biol.">
        <title>The inner nuclear membrane protein NEMP1 supports nuclear envelope openings and enucleation of erythroblasts.</title>
        <authorList>
            <person name="Hodzic D."/>
            <person name="Wu J."/>
            <person name="Krchma K."/>
            <person name="Jurisicova A."/>
            <person name="Tsatskis Y."/>
            <person name="Liu Y."/>
            <person name="Ji P."/>
            <person name="Choi K."/>
            <person name="McNeill H."/>
        </authorList>
    </citation>
    <scope>FUNCTION</scope>
    <scope>DISRUPTION PHENOTYPE</scope>
    <scope>SUBCELLULAR LOCATION</scope>
</reference>
<proteinExistence type="evidence at protein level"/>
<sequence>MAGGIKVSVWSAVGPGPRCWGAGGGGGATWLLLVVAGCVVCGSADVNVVMLQESQVDMNSSQQFCYKNVLIPKWHDIWTRIQVRVNSSKLVRVTQVDNEEKLKELEQFSIWNFFSSFLKEKLNDTYVNVGLYSTKTCLKVEMIEKDTTYSVTVTRRFDPKLFLVFLLGLTLFFCGDLLSRSQIFYYSTGMSVGIVASLLIVIFMISKFMPKRSPIYVILVGGWSFSLYLIQLVFKNLQEIWRSYWHYLLSYILTVGFMSFAVCYKYGPLENERSINLLTWTLQLLGLGLMYSSIQIPHVAFALIVIALCTKNLEYPIHWLCSTYRRMCKASGKPVPPRLLTEEEYRIQGEVETQKALQELREFCNSPECSAWKTISRIQSPKRFADFVEGSFHLTPNEVSVHEQEYGLGSIFTQDEELSSEEEGSEYPTFTQNNFLT</sequence>
<evidence type="ECO:0000250" key="1">
    <source>
        <dbReference type="UniProtKB" id="B9X187"/>
    </source>
</evidence>
<evidence type="ECO:0000250" key="2">
    <source>
        <dbReference type="UniProtKB" id="O14524"/>
    </source>
</evidence>
<evidence type="ECO:0000255" key="3"/>
<evidence type="ECO:0000256" key="4">
    <source>
        <dbReference type="SAM" id="MobiDB-lite"/>
    </source>
</evidence>
<evidence type="ECO:0000269" key="5">
    <source>
    </source>
</evidence>
<evidence type="ECO:0000269" key="6">
    <source>
    </source>
</evidence>
<evidence type="ECO:0000269" key="7">
    <source>
    </source>
</evidence>
<evidence type="ECO:0000269" key="8">
    <source>
    </source>
</evidence>
<evidence type="ECO:0000305" key="9"/>
<organism>
    <name type="scientific">Mus musculus</name>
    <name type="common">Mouse</name>
    <dbReference type="NCBI Taxonomy" id="10090"/>
    <lineage>
        <taxon>Eukaryota</taxon>
        <taxon>Metazoa</taxon>
        <taxon>Chordata</taxon>
        <taxon>Craniata</taxon>
        <taxon>Vertebrata</taxon>
        <taxon>Euteleostomi</taxon>
        <taxon>Mammalia</taxon>
        <taxon>Eutheria</taxon>
        <taxon>Euarchontoglires</taxon>
        <taxon>Glires</taxon>
        <taxon>Rodentia</taxon>
        <taxon>Myomorpha</taxon>
        <taxon>Muroidea</taxon>
        <taxon>Muridae</taxon>
        <taxon>Murinae</taxon>
        <taxon>Mus</taxon>
        <taxon>Mus</taxon>
    </lineage>
</organism>
<feature type="signal peptide" evidence="3">
    <location>
        <begin position="1"/>
        <end position="44"/>
    </location>
</feature>
<feature type="chain" id="PRO_0000050745" description="Nuclear envelope integral membrane protein 1">
    <location>
        <begin position="45"/>
        <end position="437"/>
    </location>
</feature>
<feature type="transmembrane region" description="Helical" evidence="3">
    <location>
        <begin position="159"/>
        <end position="179"/>
    </location>
</feature>
<feature type="transmembrane region" description="Helical" evidence="3">
    <location>
        <begin position="183"/>
        <end position="203"/>
    </location>
</feature>
<feature type="transmembrane region" description="Helical" evidence="3">
    <location>
        <begin position="214"/>
        <end position="234"/>
    </location>
</feature>
<feature type="transmembrane region" description="Helical" evidence="3">
    <location>
        <begin position="244"/>
        <end position="264"/>
    </location>
</feature>
<feature type="transmembrane region" description="Helical" evidence="3">
    <location>
        <begin position="288"/>
        <end position="308"/>
    </location>
</feature>
<feature type="region of interest" description="A; required for its colocalization with lamins at the nuclear envelope" evidence="6">
    <location>
        <begin position="184"/>
        <end position="295"/>
    </location>
</feature>
<feature type="region of interest" description="Required for nuclear localization" evidence="6">
    <location>
        <begin position="334"/>
        <end position="437"/>
    </location>
</feature>
<feature type="region of interest" description="B; required for interaction with RAN-GTP" evidence="6">
    <location>
        <begin position="334"/>
        <end position="403"/>
    </location>
</feature>
<feature type="region of interest" description="Disordered" evidence="4">
    <location>
        <begin position="415"/>
        <end position="437"/>
    </location>
</feature>
<feature type="compositionally biased region" description="Acidic residues" evidence="4">
    <location>
        <begin position="415"/>
        <end position="425"/>
    </location>
</feature>
<feature type="compositionally biased region" description="Polar residues" evidence="4">
    <location>
        <begin position="428"/>
        <end position="437"/>
    </location>
</feature>
<feature type="modified residue" description="Phosphoserine" evidence="2">
    <location>
        <position position="366"/>
    </location>
</feature>
<feature type="modified residue" description="Phosphoserine" evidence="2">
    <location>
        <position position="419"/>
    </location>
</feature>
<feature type="modified residue" description="Phosphoserine" evidence="2">
    <location>
        <position position="420"/>
    </location>
</feature>
<feature type="glycosylation site" description="N-linked (GlcNAc...) asparagine" evidence="5">
    <location>
        <position position="123"/>
    </location>
</feature>
<feature type="mutagenesis site" description="Partial loss of phosphorylation and loss of interaction with RAN-GTP; when associated with A/E-376; A/E-380; A/E-419 and A/E-420." evidence="6">
    <original>S</original>
    <variation>A</variation>
    <variation>E</variation>
    <location>
        <position position="366"/>
    </location>
</feature>
<feature type="mutagenesis site" description="Partial loss of phosphorylation and loss of interaction with RAN-GTP; when associated with A/E-366; A/E-380; A/E-419 and A/E-420." evidence="6">
    <original>S</original>
    <variation>A</variation>
    <variation>E</variation>
    <location>
        <position position="376"/>
    </location>
</feature>
<feature type="mutagenesis site" description="Partial loss of phosphorylation and loss of interaction with RAN-GTP; when associated with A/E-366; A/E-376; A/E-419 and A/E-420." evidence="6">
    <original>S</original>
    <variation>A</variation>
    <variation>E</variation>
    <location>
        <position position="380"/>
    </location>
</feature>
<feature type="mutagenesis site" description="Partial loss of phosphorylation and loss of interaction with RAN; when associated with A/E-366; A/E-376; A/E-380 and A/E-420." evidence="6">
    <original>S</original>
    <variation>A</variation>
    <variation>E</variation>
    <location>
        <position position="419"/>
    </location>
</feature>
<feature type="mutagenesis site" description="Partial loss of phosphorylation and loss of interaction with RAN-GTP; when associated with A/E-366; A/E-376; A/E-380 and A/E-419." evidence="6">
    <original>S</original>
    <variation>A</variation>
    <variation>E</variation>
    <location>
        <position position="420"/>
    </location>
</feature>